<comment type="function">
    <molecule>Alpha-1-microglobulin</molecule>
    <text evidence="2 3">Antioxidant and tissue repair protein with reductase, heme-binding and radical-scavenging activities. Removes and protects against harmful oxidants and repairs macromolecules in intravascular and extravascular spaces and in intracellular compartments. Intravascularly, plays a regulatory role in red cell homeostasis by preventing heme- and reactive oxygen species-induced cell damage. Binds and degrades free heme to protect fetal and adult red blood cells from hemolysis. Reduces extracellular methemoglobin, a Fe3+ (ferric) form of hemoglobin that cannot bind oxygen, back to the Fe2+ (ferrous) form deoxyhemoglobin, which has oxygen-carrying potential. Upon acute inflammation, inhibits oxidation of low-density lipoprotein particles by MPO and limits vascular damage. Extravascularly, protects from oxidation products formed on extracellular matrix structures and cell membranes. Catalyzes the reduction of carbonyl groups on oxidized collagen fibers and preserves cellular and extracellular matrix ultrastructures. Importantly, counteracts the oxidative damage at blood-placenta interface, preventing leakage of free fetal hemoglobin into the maternal circulation. Intracellularly, has a role in maintaining mitochondrial redox homeostasis. Bound to complex I of the respiratory chain of mitochondria, may scavenge free radicals and preserve mitochondrial ATP synthesis. Protects renal tubule epithelial cells from heme-induced oxidative damage to mitochondria. Reduces cytochrome c from Fe3+ (ferric) to the Fe2+ (ferrous) state through formation of superoxide anion radicals in the presence of ascorbate or NADH/NADPH electron donor cofactors, ascorbate being the preferred cofactor (By similarity). Has a chaperone role in facilitating the correct folding of bikunin in the endoplasmic reticulum compartment (By similarity).</text>
</comment>
<comment type="function">
    <molecule>Inter-alpha-trypsin inhibitor light chain</molecule>
    <text evidence="2 3">Kunitz-type serine protease inhibitor and structural component of extracellular matrix with a role in extracellular space remodeling and cell adhesion. Among others, has antiprotease activity toward kallikrein, a protease involved in airway inflammation; inhibits GZMK/granzyme, a granule-stored serine protease involved in NK and T cell cytotoxic responses; and inhibits PLG/plasmin, a protease required for activation of matrix metalloproteinases. As part of I-alpha-I complex, provides for the heavy chains to be transferred from I-alpha-I complex to hyaluronan in the presence of TNFAIP6, in a dynamic process that releases free bikunin and remodels extracellular matrix proteoglycan structures. Free bikunin, but not its heavy chain-bound form, acts as a potent protease inhibitor in airway secretions (By similarity). Part of hyaluronan-rich extracellular matrix that surrounds oocyte during cumulus oophorus expansion, an indispensable process for proper ovulation (By similarity). Also inhibits calcium oxalate crystallization (By similarity).</text>
</comment>
<comment type="function">
    <molecule>Trypstatin</molecule>
    <text evidence="4">Kunitz-type serine protease inhibitor. Has high catalytic efficiency for F10/blood coagulation factor Xa and may act as an anticoagulant by inhibiting prothrombin activation. Inhibits trypsin and mast cell CMA1/chymase and tryptase proteases.</text>
</comment>
<comment type="subunit">
    <molecule>Alpha-1-microglobulin</molecule>
    <text evidence="2 4">Monomer. Homodimer. In plasma, it occurs as a monomer or dimer and in covalently-linked complexes with immunoglobulin A (IgA), ALB/albumin and F2/prothrombin. Chromophore-bound alpha-1-microglobulin interacts with the constant region of immunoglobulin A. Chromophore-bound alpha-1-microglobulin interacts with ALB with molar ratio 2:1 and 1:1; this interaction does not prevent fatty acid binding to ALB. Interacts with F2/prothrombin (via N-terminus) with molar ratio 2:1 and 1:1; this interaction does not prevent the activation of prothrombin to thrombin. Interacts with NDUFAB1, a subunit of mitochondrial complex I (By similarity). Interacts with FN1 (By similarity).</text>
</comment>
<comment type="subunit">
    <molecule>Inter-alpha-trypsin inhibitor light chain</molecule>
    <text evidence="2">I-alpha-I plasma protease inhibitors are assembled from one or two heavy chains (HC) and one light chain, bikunin. Inter-alpha-inhibitor (I-alpha-I) is composed of ITIH1/HC1, ITIH2/HC2 and bikunin, and pre-alpha-inhibitor (P-alpha-I) of ITIH3/HC3 and bikunin. Interacts with TNFAIP6 (via Link domain).</text>
</comment>
<comment type="subunit">
    <molecule>Trypstatin</molecule>
    <text evidence="4">Monomer. Also occurs as a complex with tryptase in mast cells.</text>
</comment>
<comment type="subcellular location">
    <molecule>Alpha-1-microglobulin</molecule>
    <subcellularLocation>
        <location evidence="2">Secreted</location>
    </subcellularLocation>
    <subcellularLocation>
        <location evidence="2">Endoplasmic reticulum</location>
    </subcellularLocation>
    <subcellularLocation>
        <location evidence="2">Cytoplasm</location>
        <location evidence="2">Cytosol</location>
    </subcellularLocation>
    <subcellularLocation>
        <location evidence="2">Cell membrane</location>
        <topology evidence="2">Peripheral membrane protein</topology>
    </subcellularLocation>
    <subcellularLocation>
        <location evidence="2">Nucleus membrane</location>
        <topology evidence="2">Peripheral membrane protein</topology>
    </subcellularLocation>
    <subcellularLocation>
        <location evidence="2">Mitochondrion inner membrane</location>
        <topology evidence="2">Peripheral membrane protein</topology>
    </subcellularLocation>
    <subcellularLocation>
        <location evidence="2">Secreted</location>
        <location evidence="2">Extracellular space</location>
        <location evidence="2">Extracellular matrix</location>
    </subcellularLocation>
    <text evidence="2">The cellular uptake occurs via a non-endocytotic pathway and allows for localization to various membrane structures. A specific binding to plasma membrane suggests the presence of a cell receptor, yet to be identified. Directly binds collagen fibers type I.</text>
</comment>
<comment type="subcellular location">
    <molecule>Inter-alpha-trypsin inhibitor light chain</molecule>
    <subcellularLocation>
        <location evidence="2">Secreted</location>
    </subcellularLocation>
</comment>
<comment type="tissue specificity">
    <text>Expressed by the liver and secreted in plasma.</text>
</comment>
<comment type="domain">
    <molecule>Inter-alpha-trypsin inhibitor light chain</molecule>
    <text evidence="2">The Kunitz domains 1 and 2 serve as protease inhibitor domains.</text>
</comment>
<comment type="PTM">
    <text evidence="2">The precursor is proteolytically processed into separately functioning proteins.</text>
</comment>
<comment type="PTM">
    <molecule>Alpha-1-microglobulin</molecule>
    <text evidence="2">3-hydroxykynurenine, an oxidized tryptophan metabolite that is common in biological fluids, reacts with Cys-53, Lys-111, Lys-137, and Lys-149 to form heterogeneous polycyclic chromophores including hydroxanthommatin. The reaction by alpha-1-microglobulin is autocatalytic; the human protein forms chromophore even when expressed in insect and bacterial cells. The chromophore can react with accessible cysteines forming non-reducible thioether cross-links with other molecules of alpha-1-microglobulin or with other proteins such as Ig alpha-1 chain C region 'Cys-352'.</text>
</comment>
<comment type="PTM">
    <molecule>Inter-alpha-trypsin inhibitor light chain</molecule>
    <text evidence="2">Heavy chains are interlinked with bikunin via a chondroitin 4-sulfate bridge to the C-terminal aspartate.</text>
</comment>
<comment type="PTM">
    <molecule>Inter-alpha-trypsin inhibitor light chain</molecule>
    <text evidence="2">Proteolytically cleaved by PRSS3 at Kunitz domain 2.</text>
</comment>
<comment type="similarity">
    <text evidence="7">In the N-terminal section; belongs to the calycin superfamily. Lipocalin family.</text>
</comment>
<sequence length="349" mass="38782">MLGLGTLFLLLAACPASRADPVPALPDIQVQENFNESRIYGKWFNLAVGSTCPWLSRIKNKMSMSTLVLREGATGAEISTTSTRWRRGVCEEVSGTYEKTDMDGKFLYHKSKWNVTLESYVVHTNYDEYAIFLTKKFSRHHGPTITAKLYGREPQLRDSLLQEFREVALSVGIPENSIVFMEDRGECVPGDLEQKSTSLLRARRAVLPQENEGSGTGPLVTDVLKKEDSCQLSYSEGPCLGMIEKYYYNGASMACETFHYGGCLGNGNNFNSEKECLQTCRTVAACSLPIVQGPCRAYVELWAFDAAQGKCVQFSYGGCKGNGNKFYSEKECKEYCGVPGDGYEELTRS</sequence>
<reference key="1">
    <citation type="journal article" date="1994" name="Biochim. Biophys. Acta">
        <title>Sequencing of cDNAs encoding alpha 1-microglobulin/bikunin of Mongolian gerbil and Syrian golden hamster in comparison with man and other species.</title>
        <authorList>
            <person name="Ide H."/>
            <person name="Itoh H."/>
            <person name="Nawa Y."/>
        </authorList>
    </citation>
    <scope>NUCLEOTIDE SEQUENCE [MRNA]</scope>
    <source>
        <tissue>Liver</tissue>
    </source>
</reference>
<reference key="2">
    <citation type="journal article" date="1996" name="J. Biochem.">
        <title>Inter-alpha-trypsin inhibitor and its related proteins in Syrian hamster urine and plasma.</title>
        <authorList>
            <person name="Yamamoto T."/>
            <person name="Yamamoto K."/>
            <person name="Sinohara H."/>
        </authorList>
    </citation>
    <scope>PROTEIN SEQUENCE OF 205-348</scope>
    <scope>SUBUNIT</scope>
    <source>
        <tissue>Plasma</tissue>
        <tissue>Urine</tissue>
    </source>
</reference>
<name>AMBP_MESAU</name>
<keyword id="KW-1003">Cell membrane</keyword>
<keyword id="KW-0157">Chromophore</keyword>
<keyword id="KW-0165">Cleavage on pair of basic residues</keyword>
<keyword id="KW-0963">Cytoplasm</keyword>
<keyword id="KW-0903">Direct protein sequencing</keyword>
<keyword id="KW-1015">Disulfide bond</keyword>
<keyword id="KW-0256">Endoplasmic reticulum</keyword>
<keyword id="KW-0272">Extracellular matrix</keyword>
<keyword id="KW-0325">Glycoprotein</keyword>
<keyword id="KW-0472">Membrane</keyword>
<keyword id="KW-0496">Mitochondrion</keyword>
<keyword id="KW-0999">Mitochondrion inner membrane</keyword>
<keyword id="KW-0539">Nucleus</keyword>
<keyword id="KW-0560">Oxidoreductase</keyword>
<keyword id="KW-0646">Protease inhibitor</keyword>
<keyword id="KW-0654">Proteoglycan</keyword>
<keyword id="KW-1185">Reference proteome</keyword>
<keyword id="KW-0677">Repeat</keyword>
<keyword id="KW-0964">Secreted</keyword>
<keyword id="KW-0722">Serine protease inhibitor</keyword>
<keyword id="KW-0732">Signal</keyword>
<gene>
    <name type="primary">AMBP</name>
    <name type="synonym">ITIL</name>
</gene>
<protein>
    <recommendedName>
        <fullName>Protein AMBP</fullName>
    </recommendedName>
    <component>
        <recommendedName>
            <fullName>Alpha-1-microglobulin</fullName>
            <ecNumber evidence="2">1.6.2.-</ecNumber>
        </recommendedName>
    </component>
    <component>
        <recommendedName>
            <fullName>Inter-alpha-trypsin inhibitor light chain</fullName>
            <shortName>ITI-LC</shortName>
        </recommendedName>
        <alternativeName>
            <fullName>Bikunin</fullName>
        </alternativeName>
        <alternativeName>
            <fullName>HI-30</fullName>
        </alternativeName>
    </component>
    <component>
        <recommendedName>
            <fullName>Trypstatin</fullName>
        </recommendedName>
    </component>
</protein>
<organism>
    <name type="scientific">Mesocricetus auratus</name>
    <name type="common">Golden hamster</name>
    <dbReference type="NCBI Taxonomy" id="10036"/>
    <lineage>
        <taxon>Eukaryota</taxon>
        <taxon>Metazoa</taxon>
        <taxon>Chordata</taxon>
        <taxon>Craniata</taxon>
        <taxon>Vertebrata</taxon>
        <taxon>Euteleostomi</taxon>
        <taxon>Mammalia</taxon>
        <taxon>Eutheria</taxon>
        <taxon>Euarchontoglires</taxon>
        <taxon>Glires</taxon>
        <taxon>Rodentia</taxon>
        <taxon>Myomorpha</taxon>
        <taxon>Muroidea</taxon>
        <taxon>Cricetidae</taxon>
        <taxon>Cricetinae</taxon>
        <taxon>Mesocricetus</taxon>
    </lineage>
</organism>
<accession>Q60559</accession>
<accession>Q60558</accession>
<accession>Q9QW86</accession>
<accession>Q9QW87</accession>
<proteinExistence type="evidence at protein level"/>
<dbReference type="EC" id="1.6.2.-" evidence="2"/>
<dbReference type="EMBL" id="D31814">
    <property type="protein sequence ID" value="BAA06601.1"/>
    <property type="molecule type" value="mRNA"/>
</dbReference>
<dbReference type="SMR" id="Q60559"/>
<dbReference type="STRING" id="10036.ENSMAUP00000003326"/>
<dbReference type="MEROPS" id="I02.006"/>
<dbReference type="GlyCosmos" id="Q60559">
    <property type="glycosylation" value="2 sites, No reported glycans"/>
</dbReference>
<dbReference type="eggNOG" id="KOG4295">
    <property type="taxonomic scope" value="Eukaryota"/>
</dbReference>
<dbReference type="Proteomes" id="UP000189706">
    <property type="component" value="Unplaced"/>
</dbReference>
<dbReference type="GO" id="GO:0005829">
    <property type="term" value="C:cytosol"/>
    <property type="evidence" value="ECO:0007669"/>
    <property type="project" value="UniProtKB-SubCell"/>
</dbReference>
<dbReference type="GO" id="GO:0005783">
    <property type="term" value="C:endoplasmic reticulum"/>
    <property type="evidence" value="ECO:0007669"/>
    <property type="project" value="UniProtKB-SubCell"/>
</dbReference>
<dbReference type="GO" id="GO:0005576">
    <property type="term" value="C:extracellular region"/>
    <property type="evidence" value="ECO:0007669"/>
    <property type="project" value="UniProtKB-SubCell"/>
</dbReference>
<dbReference type="GO" id="GO:0005743">
    <property type="term" value="C:mitochondrial inner membrane"/>
    <property type="evidence" value="ECO:0007669"/>
    <property type="project" value="UniProtKB-SubCell"/>
</dbReference>
<dbReference type="GO" id="GO:0031965">
    <property type="term" value="C:nuclear membrane"/>
    <property type="evidence" value="ECO:0007669"/>
    <property type="project" value="UniProtKB-SubCell"/>
</dbReference>
<dbReference type="GO" id="GO:0005886">
    <property type="term" value="C:plasma membrane"/>
    <property type="evidence" value="ECO:0000250"/>
    <property type="project" value="UniProtKB"/>
</dbReference>
<dbReference type="GO" id="GO:0020037">
    <property type="term" value="F:heme binding"/>
    <property type="evidence" value="ECO:0000250"/>
    <property type="project" value="UniProtKB"/>
</dbReference>
<dbReference type="GO" id="GO:0019862">
    <property type="term" value="F:IgA binding"/>
    <property type="evidence" value="ECO:0000250"/>
    <property type="project" value="UniProtKB"/>
</dbReference>
<dbReference type="GO" id="GO:0016491">
    <property type="term" value="F:oxidoreductase activity"/>
    <property type="evidence" value="ECO:0007669"/>
    <property type="project" value="UniProtKB-KW"/>
</dbReference>
<dbReference type="GO" id="GO:0042803">
    <property type="term" value="F:protein homodimerization activity"/>
    <property type="evidence" value="ECO:0000250"/>
    <property type="project" value="UniProtKB"/>
</dbReference>
<dbReference type="GO" id="GO:0004867">
    <property type="term" value="F:serine-type endopeptidase inhibitor activity"/>
    <property type="evidence" value="ECO:0007669"/>
    <property type="project" value="UniProtKB-KW"/>
</dbReference>
<dbReference type="CDD" id="cd22596">
    <property type="entry name" value="Kunitz_bikunin_1-like"/>
    <property type="match status" value="1"/>
</dbReference>
<dbReference type="CDD" id="cd22597">
    <property type="entry name" value="Kunitz_bikunin_2-like"/>
    <property type="match status" value="1"/>
</dbReference>
<dbReference type="CDD" id="cd19418">
    <property type="entry name" value="lipocalin_A1M-like"/>
    <property type="match status" value="1"/>
</dbReference>
<dbReference type="FunFam" id="2.40.128.20:FF:000007">
    <property type="entry name" value="Alpha-1-microglobulin/bikunin precursor"/>
    <property type="match status" value="1"/>
</dbReference>
<dbReference type="FunFam" id="4.10.410.10:FF:000010">
    <property type="entry name" value="Alpha1-microglobulin/bikunin (AMBP)"/>
    <property type="match status" value="1"/>
</dbReference>
<dbReference type="Gene3D" id="2.40.128.20">
    <property type="match status" value="1"/>
</dbReference>
<dbReference type="Gene3D" id="4.10.410.10">
    <property type="entry name" value="Pancreatic trypsin inhibitor Kunitz domain"/>
    <property type="match status" value="2"/>
</dbReference>
<dbReference type="InterPro" id="IPR002968">
    <property type="entry name" value="A1-microglobln"/>
</dbReference>
<dbReference type="InterPro" id="IPR029856">
    <property type="entry name" value="AMBP"/>
</dbReference>
<dbReference type="InterPro" id="IPR012674">
    <property type="entry name" value="Calycin"/>
</dbReference>
<dbReference type="InterPro" id="IPR002223">
    <property type="entry name" value="Kunitz_BPTI"/>
</dbReference>
<dbReference type="InterPro" id="IPR036880">
    <property type="entry name" value="Kunitz_BPTI_sf"/>
</dbReference>
<dbReference type="InterPro" id="IPR022272">
    <property type="entry name" value="Lipocalin_CS"/>
</dbReference>
<dbReference type="InterPro" id="IPR000566">
    <property type="entry name" value="Lipocln_cytosolic_FA-bd_dom"/>
</dbReference>
<dbReference type="InterPro" id="IPR020901">
    <property type="entry name" value="Prtase_inh_Kunz-CS"/>
</dbReference>
<dbReference type="PANTHER" id="PTHR46676">
    <property type="entry name" value="PROTEIN AMBP"/>
    <property type="match status" value="1"/>
</dbReference>
<dbReference type="PANTHER" id="PTHR46676:SF1">
    <property type="entry name" value="PROTEIN AMBP"/>
    <property type="match status" value="1"/>
</dbReference>
<dbReference type="Pfam" id="PF00014">
    <property type="entry name" value="Kunitz_BPTI"/>
    <property type="match status" value="2"/>
</dbReference>
<dbReference type="Pfam" id="PF00061">
    <property type="entry name" value="Lipocalin"/>
    <property type="match status" value="1"/>
</dbReference>
<dbReference type="PRINTS" id="PR01215">
    <property type="entry name" value="A1MCGLOBULIN"/>
</dbReference>
<dbReference type="PRINTS" id="PR00759">
    <property type="entry name" value="BASICPTASE"/>
</dbReference>
<dbReference type="PRINTS" id="PR00179">
    <property type="entry name" value="LIPOCALIN"/>
</dbReference>
<dbReference type="SMART" id="SM00131">
    <property type="entry name" value="KU"/>
    <property type="match status" value="2"/>
</dbReference>
<dbReference type="SUPFAM" id="SSF57362">
    <property type="entry name" value="BPTI-like"/>
    <property type="match status" value="2"/>
</dbReference>
<dbReference type="SUPFAM" id="SSF50814">
    <property type="entry name" value="Lipocalins"/>
    <property type="match status" value="1"/>
</dbReference>
<dbReference type="PROSITE" id="PS00280">
    <property type="entry name" value="BPTI_KUNITZ_1"/>
    <property type="match status" value="2"/>
</dbReference>
<dbReference type="PROSITE" id="PS50279">
    <property type="entry name" value="BPTI_KUNITZ_2"/>
    <property type="match status" value="2"/>
</dbReference>
<dbReference type="PROSITE" id="PS00213">
    <property type="entry name" value="LIPOCALIN"/>
    <property type="match status" value="1"/>
</dbReference>
<feature type="signal peptide" evidence="1">
    <location>
        <begin position="1"/>
        <end position="19"/>
    </location>
</feature>
<feature type="chain" id="PRO_0000017890" description="Alpha-1-microglobulin">
    <location>
        <begin position="20"/>
        <end position="202"/>
    </location>
</feature>
<feature type="chain" id="PRO_0000017891" description="Inter-alpha-trypsin inhibitor light chain">
    <location>
        <begin position="205"/>
        <end position="349"/>
    </location>
</feature>
<feature type="chain" id="PRO_0000017892" description="Trypstatin">
    <location>
        <begin position="282"/>
        <end position="349"/>
    </location>
</feature>
<feature type="domain" description="BPTI/Kunitz inhibitor 1" evidence="6">
    <location>
        <begin position="230"/>
        <end position="280"/>
    </location>
</feature>
<feature type="domain" description="BPTI/Kunitz inhibitor 2" evidence="6">
    <location>
        <begin position="286"/>
        <end position="336"/>
    </location>
</feature>
<feature type="binding site" description="covalent" evidence="2">
    <location>
        <position position="52"/>
    </location>
    <ligand>
        <name>3-hydroxy-L-kynurenine</name>
        <dbReference type="ChEBI" id="CHEBI:58125"/>
        <note>multimeric 3-hydroxykynurenine chromophore</note>
    </ligand>
</feature>
<feature type="binding site" description="covalent" evidence="2">
    <location>
        <position position="110"/>
    </location>
    <ligand>
        <name>3-hydroxy-L-kynurenine</name>
        <dbReference type="ChEBI" id="CHEBI:58125"/>
        <note>multimeric 3-hydroxykynurenine chromophore</note>
    </ligand>
</feature>
<feature type="binding site" description="covalent" evidence="2">
    <location>
        <position position="136"/>
    </location>
    <ligand>
        <name>3-hydroxy-L-kynurenine</name>
        <dbReference type="ChEBI" id="CHEBI:58125"/>
        <note>multimeric 3-hydroxykynurenine chromophore</note>
    </ligand>
</feature>
<feature type="binding site" description="covalent" evidence="2">
    <location>
        <position position="148"/>
    </location>
    <ligand>
        <name>3-hydroxy-L-kynurenine</name>
        <dbReference type="ChEBI" id="CHEBI:58125"/>
        <note>multimeric 3-hydroxykynurenine chromophore</note>
    </ligand>
</feature>
<feature type="site" description="Inhibitory (P1) (chymotrypsin, elastase)" evidence="1">
    <location>
        <begin position="240"/>
        <end position="241"/>
    </location>
</feature>
<feature type="site" description="Inhibitory (P1) (trypsin)" evidence="1">
    <location>
        <begin position="296"/>
        <end position="297"/>
    </location>
</feature>
<feature type="glycosylation site" description="N-linked (GlcNAc...) asparagine" evidence="5">
    <location>
        <position position="35"/>
    </location>
</feature>
<feature type="glycosylation site" description="N-linked (GlcNAc...) asparagine" evidence="5">
    <location>
        <position position="114"/>
    </location>
</feature>
<feature type="glycosylation site" description="O-linked (Xyl...) (chondroitin sulfate) serine" evidence="2">
    <location>
        <position position="214"/>
    </location>
</feature>
<feature type="disulfide bond" evidence="6">
    <location>
        <begin position="90"/>
        <end position="187"/>
    </location>
</feature>
<feature type="disulfide bond" evidence="6">
    <location>
        <begin position="230"/>
        <end position="280"/>
    </location>
</feature>
<feature type="disulfide bond" evidence="6">
    <location>
        <begin position="239"/>
        <end position="263"/>
    </location>
</feature>
<feature type="disulfide bond" evidence="6">
    <location>
        <begin position="255"/>
        <end position="276"/>
    </location>
</feature>
<feature type="disulfide bond" evidence="6">
    <location>
        <begin position="286"/>
        <end position="336"/>
    </location>
</feature>
<feature type="disulfide bond" evidence="6">
    <location>
        <begin position="295"/>
        <end position="319"/>
    </location>
</feature>
<feature type="disulfide bond" evidence="6">
    <location>
        <begin position="311"/>
        <end position="332"/>
    </location>
</feature>
<feature type="sequence conflict" description="In Ref. 2; AA sequence." evidence="7" ref="2">
    <original>G</original>
    <variation>E</variation>
    <location>
        <position position="342"/>
    </location>
</feature>
<evidence type="ECO:0000250" key="1"/>
<evidence type="ECO:0000250" key="2">
    <source>
        <dbReference type="UniProtKB" id="P02760"/>
    </source>
</evidence>
<evidence type="ECO:0000250" key="3">
    <source>
        <dbReference type="UniProtKB" id="Q07456"/>
    </source>
</evidence>
<evidence type="ECO:0000250" key="4">
    <source>
        <dbReference type="UniProtKB" id="Q64240"/>
    </source>
</evidence>
<evidence type="ECO:0000255" key="5"/>
<evidence type="ECO:0000255" key="6">
    <source>
        <dbReference type="PROSITE-ProRule" id="PRU00031"/>
    </source>
</evidence>
<evidence type="ECO:0000305" key="7"/>